<name>PM34_MOUSE</name>
<evidence type="ECO:0000250" key="1"/>
<evidence type="ECO:0000250" key="2">
    <source>
        <dbReference type="UniProtKB" id="O43808"/>
    </source>
</evidence>
<evidence type="ECO:0000255" key="3"/>
<evidence type="ECO:0000269" key="4">
    <source>
    </source>
</evidence>
<evidence type="ECO:0000305" key="5"/>
<reference key="1">
    <citation type="journal article" date="1998" name="Eur. J. Biochem.">
        <title>Identification and characterization of human PMP34, a protein closely related to the peroxisomal integral membrane protein PMP47 of Candida boidinii.</title>
        <authorList>
            <person name="Wylin T."/>
            <person name="Baes M."/>
            <person name="Brees C."/>
            <person name="Mannaerts G.P."/>
            <person name="Fransen M."/>
            <person name="Van Veldhoven P.P."/>
        </authorList>
    </citation>
    <scope>NUCLEOTIDE SEQUENCE [MRNA]</scope>
    <scope>TISSUE SPECIFICITY</scope>
</reference>
<reference key="2">
    <citation type="journal article" date="2005" name="Science">
        <title>The transcriptional landscape of the mammalian genome.</title>
        <authorList>
            <person name="Carninci P."/>
            <person name="Kasukawa T."/>
            <person name="Katayama S."/>
            <person name="Gough J."/>
            <person name="Frith M.C."/>
            <person name="Maeda N."/>
            <person name="Oyama R."/>
            <person name="Ravasi T."/>
            <person name="Lenhard B."/>
            <person name="Wells C."/>
            <person name="Kodzius R."/>
            <person name="Shimokawa K."/>
            <person name="Bajic V.B."/>
            <person name="Brenner S.E."/>
            <person name="Batalov S."/>
            <person name="Forrest A.R."/>
            <person name="Zavolan M."/>
            <person name="Davis M.J."/>
            <person name="Wilming L.G."/>
            <person name="Aidinis V."/>
            <person name="Allen J.E."/>
            <person name="Ambesi-Impiombato A."/>
            <person name="Apweiler R."/>
            <person name="Aturaliya R.N."/>
            <person name="Bailey T.L."/>
            <person name="Bansal M."/>
            <person name="Baxter L."/>
            <person name="Beisel K.W."/>
            <person name="Bersano T."/>
            <person name="Bono H."/>
            <person name="Chalk A.M."/>
            <person name="Chiu K.P."/>
            <person name="Choudhary V."/>
            <person name="Christoffels A."/>
            <person name="Clutterbuck D.R."/>
            <person name="Crowe M.L."/>
            <person name="Dalla E."/>
            <person name="Dalrymple B.P."/>
            <person name="de Bono B."/>
            <person name="Della Gatta G."/>
            <person name="di Bernardo D."/>
            <person name="Down T."/>
            <person name="Engstrom P."/>
            <person name="Fagiolini M."/>
            <person name="Faulkner G."/>
            <person name="Fletcher C.F."/>
            <person name="Fukushima T."/>
            <person name="Furuno M."/>
            <person name="Futaki S."/>
            <person name="Gariboldi M."/>
            <person name="Georgii-Hemming P."/>
            <person name="Gingeras T.R."/>
            <person name="Gojobori T."/>
            <person name="Green R.E."/>
            <person name="Gustincich S."/>
            <person name="Harbers M."/>
            <person name="Hayashi Y."/>
            <person name="Hensch T.K."/>
            <person name="Hirokawa N."/>
            <person name="Hill D."/>
            <person name="Huminiecki L."/>
            <person name="Iacono M."/>
            <person name="Ikeo K."/>
            <person name="Iwama A."/>
            <person name="Ishikawa T."/>
            <person name="Jakt M."/>
            <person name="Kanapin A."/>
            <person name="Katoh M."/>
            <person name="Kawasawa Y."/>
            <person name="Kelso J."/>
            <person name="Kitamura H."/>
            <person name="Kitano H."/>
            <person name="Kollias G."/>
            <person name="Krishnan S.P."/>
            <person name="Kruger A."/>
            <person name="Kummerfeld S.K."/>
            <person name="Kurochkin I.V."/>
            <person name="Lareau L.F."/>
            <person name="Lazarevic D."/>
            <person name="Lipovich L."/>
            <person name="Liu J."/>
            <person name="Liuni S."/>
            <person name="McWilliam S."/>
            <person name="Madan Babu M."/>
            <person name="Madera M."/>
            <person name="Marchionni L."/>
            <person name="Matsuda H."/>
            <person name="Matsuzawa S."/>
            <person name="Miki H."/>
            <person name="Mignone F."/>
            <person name="Miyake S."/>
            <person name="Morris K."/>
            <person name="Mottagui-Tabar S."/>
            <person name="Mulder N."/>
            <person name="Nakano N."/>
            <person name="Nakauchi H."/>
            <person name="Ng P."/>
            <person name="Nilsson R."/>
            <person name="Nishiguchi S."/>
            <person name="Nishikawa S."/>
            <person name="Nori F."/>
            <person name="Ohara O."/>
            <person name="Okazaki Y."/>
            <person name="Orlando V."/>
            <person name="Pang K.C."/>
            <person name="Pavan W.J."/>
            <person name="Pavesi G."/>
            <person name="Pesole G."/>
            <person name="Petrovsky N."/>
            <person name="Piazza S."/>
            <person name="Reed J."/>
            <person name="Reid J.F."/>
            <person name="Ring B.Z."/>
            <person name="Ringwald M."/>
            <person name="Rost B."/>
            <person name="Ruan Y."/>
            <person name="Salzberg S.L."/>
            <person name="Sandelin A."/>
            <person name="Schneider C."/>
            <person name="Schoenbach C."/>
            <person name="Sekiguchi K."/>
            <person name="Semple C.A."/>
            <person name="Seno S."/>
            <person name="Sessa L."/>
            <person name="Sheng Y."/>
            <person name="Shibata Y."/>
            <person name="Shimada H."/>
            <person name="Shimada K."/>
            <person name="Silva D."/>
            <person name="Sinclair B."/>
            <person name="Sperling S."/>
            <person name="Stupka E."/>
            <person name="Sugiura K."/>
            <person name="Sultana R."/>
            <person name="Takenaka Y."/>
            <person name="Taki K."/>
            <person name="Tammoja K."/>
            <person name="Tan S.L."/>
            <person name="Tang S."/>
            <person name="Taylor M.S."/>
            <person name="Tegner J."/>
            <person name="Teichmann S.A."/>
            <person name="Ueda H.R."/>
            <person name="van Nimwegen E."/>
            <person name="Verardo R."/>
            <person name="Wei C.L."/>
            <person name="Yagi K."/>
            <person name="Yamanishi H."/>
            <person name="Zabarovsky E."/>
            <person name="Zhu S."/>
            <person name="Zimmer A."/>
            <person name="Hide W."/>
            <person name="Bult C."/>
            <person name="Grimmond S.M."/>
            <person name="Teasdale R.D."/>
            <person name="Liu E.T."/>
            <person name="Brusic V."/>
            <person name="Quackenbush J."/>
            <person name="Wahlestedt C."/>
            <person name="Mattick J.S."/>
            <person name="Hume D.A."/>
            <person name="Kai C."/>
            <person name="Sasaki D."/>
            <person name="Tomaru Y."/>
            <person name="Fukuda S."/>
            <person name="Kanamori-Katayama M."/>
            <person name="Suzuki M."/>
            <person name="Aoki J."/>
            <person name="Arakawa T."/>
            <person name="Iida J."/>
            <person name="Imamura K."/>
            <person name="Itoh M."/>
            <person name="Kato T."/>
            <person name="Kawaji H."/>
            <person name="Kawagashira N."/>
            <person name="Kawashima T."/>
            <person name="Kojima M."/>
            <person name="Kondo S."/>
            <person name="Konno H."/>
            <person name="Nakano K."/>
            <person name="Ninomiya N."/>
            <person name="Nishio T."/>
            <person name="Okada M."/>
            <person name="Plessy C."/>
            <person name="Shibata K."/>
            <person name="Shiraki T."/>
            <person name="Suzuki S."/>
            <person name="Tagami M."/>
            <person name="Waki K."/>
            <person name="Watahiki A."/>
            <person name="Okamura-Oho Y."/>
            <person name="Suzuki H."/>
            <person name="Kawai J."/>
            <person name="Hayashizaki Y."/>
        </authorList>
    </citation>
    <scope>NUCLEOTIDE SEQUENCE [LARGE SCALE MRNA]</scope>
    <source>
        <strain>C57BL/6J</strain>
        <tissue>Kidney</tissue>
    </source>
</reference>
<reference key="3">
    <citation type="journal article" date="2004" name="Genome Res.">
        <title>The status, quality, and expansion of the NIH full-length cDNA project: the Mammalian Gene Collection (MGC).</title>
        <authorList>
            <consortium name="The MGC Project Team"/>
        </authorList>
    </citation>
    <scope>NUCLEOTIDE SEQUENCE [LARGE SCALE MRNA]</scope>
    <source>
        <strain>Czech II</strain>
        <strain>FVB/N</strain>
        <tissue>Mammary gland</tissue>
    </source>
</reference>
<reference key="4">
    <citation type="journal article" date="2010" name="Cell">
        <title>A tissue-specific atlas of mouse protein phosphorylation and expression.</title>
        <authorList>
            <person name="Huttlin E.L."/>
            <person name="Jedrychowski M.P."/>
            <person name="Elias J.E."/>
            <person name="Goswami T."/>
            <person name="Rad R."/>
            <person name="Beausoleil S.A."/>
            <person name="Villen J."/>
            <person name="Haas W."/>
            <person name="Sowa M.E."/>
            <person name="Gygi S.P."/>
        </authorList>
    </citation>
    <scope>IDENTIFICATION BY MASS SPECTROMETRY [LARGE SCALE ANALYSIS]</scope>
    <source>
        <tissue>Kidney</tissue>
        <tissue>Liver</tissue>
        <tissue>Lung</tissue>
        <tissue>Testis</tissue>
    </source>
</reference>
<organism>
    <name type="scientific">Mus musculus</name>
    <name type="common">Mouse</name>
    <dbReference type="NCBI Taxonomy" id="10090"/>
    <lineage>
        <taxon>Eukaryota</taxon>
        <taxon>Metazoa</taxon>
        <taxon>Chordata</taxon>
        <taxon>Craniata</taxon>
        <taxon>Vertebrata</taxon>
        <taxon>Euteleostomi</taxon>
        <taxon>Mammalia</taxon>
        <taxon>Eutheria</taxon>
        <taxon>Euarchontoglires</taxon>
        <taxon>Glires</taxon>
        <taxon>Rodentia</taxon>
        <taxon>Myomorpha</taxon>
        <taxon>Muroidea</taxon>
        <taxon>Muridae</taxon>
        <taxon>Murinae</taxon>
        <taxon>Mus</taxon>
        <taxon>Mus</taxon>
    </lineage>
</organism>
<dbReference type="EMBL" id="AJ006341">
    <property type="protein sequence ID" value="CAA06984.1"/>
    <property type="molecule type" value="mRNA"/>
</dbReference>
<dbReference type="EMBL" id="AK002388">
    <property type="protein sequence ID" value="BAB22062.1"/>
    <property type="molecule type" value="mRNA"/>
</dbReference>
<dbReference type="EMBL" id="BC008571">
    <property type="protein sequence ID" value="AAH08571.1"/>
    <property type="molecule type" value="mRNA"/>
</dbReference>
<dbReference type="EMBL" id="BC011292">
    <property type="protein sequence ID" value="AAH11292.1"/>
    <property type="molecule type" value="mRNA"/>
</dbReference>
<dbReference type="CCDS" id="CCDS27666.1"/>
<dbReference type="RefSeq" id="NP_035529.1">
    <property type="nucleotide sequence ID" value="NM_011399.3"/>
</dbReference>
<dbReference type="SMR" id="O70579"/>
<dbReference type="BioGRID" id="203303">
    <property type="interactions" value="6"/>
</dbReference>
<dbReference type="FunCoup" id="O70579">
    <property type="interactions" value="1513"/>
</dbReference>
<dbReference type="STRING" id="10090.ENSMUSP00000023040"/>
<dbReference type="PhosphoSitePlus" id="O70579"/>
<dbReference type="jPOST" id="O70579"/>
<dbReference type="PaxDb" id="10090-ENSMUSP00000023040"/>
<dbReference type="PeptideAtlas" id="O70579"/>
<dbReference type="ProteomicsDB" id="289633"/>
<dbReference type="Pumba" id="O70579"/>
<dbReference type="Antibodypedia" id="26801">
    <property type="antibodies" value="101 antibodies from 23 providers"/>
</dbReference>
<dbReference type="DNASU" id="20524"/>
<dbReference type="Ensembl" id="ENSMUST00000023040.9">
    <property type="protein sequence ID" value="ENSMUSP00000023040.8"/>
    <property type="gene ID" value="ENSMUSG00000022404.9"/>
</dbReference>
<dbReference type="GeneID" id="20524"/>
<dbReference type="KEGG" id="mmu:20524"/>
<dbReference type="UCSC" id="uc007wwk.1">
    <property type="organism name" value="mouse"/>
</dbReference>
<dbReference type="AGR" id="MGI:1342248"/>
<dbReference type="CTD" id="10478"/>
<dbReference type="MGI" id="MGI:1342248">
    <property type="gene designation" value="Slc25a17"/>
</dbReference>
<dbReference type="VEuPathDB" id="HostDB:ENSMUSG00000022404"/>
<dbReference type="eggNOG" id="KOG0769">
    <property type="taxonomic scope" value="Eukaryota"/>
</dbReference>
<dbReference type="GeneTree" id="ENSGT00920000149129"/>
<dbReference type="HOGENOM" id="CLU_015166_6_3_1"/>
<dbReference type="InParanoid" id="O70579"/>
<dbReference type="OMA" id="QFMMYEL"/>
<dbReference type="OrthoDB" id="10266426at2759"/>
<dbReference type="PhylomeDB" id="O70579"/>
<dbReference type="TreeFam" id="TF324772"/>
<dbReference type="Reactome" id="R-MMU-389599">
    <property type="pathway name" value="Alpha-oxidation of phytanate"/>
</dbReference>
<dbReference type="Reactome" id="R-MMU-9603798">
    <property type="pathway name" value="Class I peroxisomal membrane protein import"/>
</dbReference>
<dbReference type="BioGRID-ORCS" id="20524">
    <property type="hits" value="3 hits in 79 CRISPR screens"/>
</dbReference>
<dbReference type="ChiTaRS" id="Slc25a17">
    <property type="organism name" value="mouse"/>
</dbReference>
<dbReference type="PRO" id="PR:O70579"/>
<dbReference type="Proteomes" id="UP000000589">
    <property type="component" value="Chromosome 15"/>
</dbReference>
<dbReference type="RNAct" id="O70579">
    <property type="molecule type" value="protein"/>
</dbReference>
<dbReference type="Bgee" id="ENSMUSG00000022404">
    <property type="expression patterns" value="Expressed in right kidney and 269 other cell types or tissues"/>
</dbReference>
<dbReference type="ExpressionAtlas" id="O70579">
    <property type="expression patterns" value="baseline and differential"/>
</dbReference>
<dbReference type="GO" id="GO:0005739">
    <property type="term" value="C:mitochondrion"/>
    <property type="evidence" value="ECO:0007005"/>
    <property type="project" value="MGI"/>
</dbReference>
<dbReference type="GO" id="GO:0005778">
    <property type="term" value="C:peroxisomal membrane"/>
    <property type="evidence" value="ECO:0000314"/>
    <property type="project" value="MGI"/>
</dbReference>
<dbReference type="GO" id="GO:0015217">
    <property type="term" value="F:ADP transmembrane transporter activity"/>
    <property type="evidence" value="ECO:0000250"/>
    <property type="project" value="UniProtKB"/>
</dbReference>
<dbReference type="GO" id="GO:0080122">
    <property type="term" value="F:AMP transmembrane transporter activity"/>
    <property type="evidence" value="ECO:0000250"/>
    <property type="project" value="UniProtKB"/>
</dbReference>
<dbReference type="GO" id="GO:0015297">
    <property type="term" value="F:antiporter activity"/>
    <property type="evidence" value="ECO:0007669"/>
    <property type="project" value="UniProtKB-KW"/>
</dbReference>
<dbReference type="GO" id="GO:0005347">
    <property type="term" value="F:ATP transmembrane transporter activity"/>
    <property type="evidence" value="ECO:0007669"/>
    <property type="project" value="Ensembl"/>
</dbReference>
<dbReference type="GO" id="GO:0015228">
    <property type="term" value="F:coenzyme A transmembrane transporter activity"/>
    <property type="evidence" value="ECO:0000250"/>
    <property type="project" value="UniProtKB"/>
</dbReference>
<dbReference type="GO" id="GO:0015230">
    <property type="term" value="F:FAD transmembrane transporter activity"/>
    <property type="evidence" value="ECO:0000250"/>
    <property type="project" value="UniProtKB"/>
</dbReference>
<dbReference type="GO" id="GO:0044610">
    <property type="term" value="F:FMN transmembrane transporter activity"/>
    <property type="evidence" value="ECO:0000250"/>
    <property type="project" value="UniProtKB"/>
</dbReference>
<dbReference type="GO" id="GO:0051724">
    <property type="term" value="F:NAD transmembrane transporter activity"/>
    <property type="evidence" value="ECO:0000250"/>
    <property type="project" value="UniProtKB"/>
</dbReference>
<dbReference type="GO" id="GO:0051087">
    <property type="term" value="F:protein-folding chaperone binding"/>
    <property type="evidence" value="ECO:0007669"/>
    <property type="project" value="Ensembl"/>
</dbReference>
<dbReference type="GO" id="GO:0015866">
    <property type="term" value="P:ADP transport"/>
    <property type="evidence" value="ECO:0000250"/>
    <property type="project" value="UniProtKB"/>
</dbReference>
<dbReference type="GO" id="GO:0080121">
    <property type="term" value="P:AMP transport"/>
    <property type="evidence" value="ECO:0000250"/>
    <property type="project" value="UniProtKB"/>
</dbReference>
<dbReference type="GO" id="GO:0035349">
    <property type="term" value="P:coenzyme A transmembrane transport"/>
    <property type="evidence" value="ECO:0000250"/>
    <property type="project" value="UniProtKB"/>
</dbReference>
<dbReference type="GO" id="GO:0035350">
    <property type="term" value="P:FAD transmembrane transport"/>
    <property type="evidence" value="ECO:0000250"/>
    <property type="project" value="UniProtKB"/>
</dbReference>
<dbReference type="GO" id="GO:0006635">
    <property type="term" value="P:fatty acid beta-oxidation"/>
    <property type="evidence" value="ECO:0007669"/>
    <property type="project" value="Ensembl"/>
</dbReference>
<dbReference type="GO" id="GO:0015908">
    <property type="term" value="P:fatty acid transport"/>
    <property type="evidence" value="ECO:0007669"/>
    <property type="project" value="Ensembl"/>
</dbReference>
<dbReference type="GO" id="GO:0043132">
    <property type="term" value="P:NAD transport"/>
    <property type="evidence" value="ECO:0000250"/>
    <property type="project" value="UniProtKB"/>
</dbReference>
<dbReference type="FunFam" id="1.50.40.10:FF:000023">
    <property type="entry name" value="peroxisomal membrane protein PMP34 isoform X1"/>
    <property type="match status" value="1"/>
</dbReference>
<dbReference type="FunFam" id="1.50.40.10:FF:000045">
    <property type="entry name" value="peroxisomal membrane protein PMP34 isoform X1"/>
    <property type="match status" value="1"/>
</dbReference>
<dbReference type="Gene3D" id="1.50.40.10">
    <property type="entry name" value="Mitochondrial carrier domain"/>
    <property type="match status" value="2"/>
</dbReference>
<dbReference type="InterPro" id="IPR002067">
    <property type="entry name" value="Mit_carrier"/>
</dbReference>
<dbReference type="InterPro" id="IPR052217">
    <property type="entry name" value="Mito/Peroxisomal_Carrier"/>
</dbReference>
<dbReference type="InterPro" id="IPR018108">
    <property type="entry name" value="Mitochondrial_sb/sol_carrier"/>
</dbReference>
<dbReference type="InterPro" id="IPR023395">
    <property type="entry name" value="Mt_carrier_dom_sf"/>
</dbReference>
<dbReference type="PANTHER" id="PTHR45939:SF5">
    <property type="entry name" value="PEROXISOMAL MEMBRANE PROTEIN PMP34"/>
    <property type="match status" value="1"/>
</dbReference>
<dbReference type="PANTHER" id="PTHR45939">
    <property type="entry name" value="PEROXISOMAL MEMBRANE PROTEIN PMP34-RELATED"/>
    <property type="match status" value="1"/>
</dbReference>
<dbReference type="Pfam" id="PF00153">
    <property type="entry name" value="Mito_carr"/>
    <property type="match status" value="3"/>
</dbReference>
<dbReference type="PRINTS" id="PR00926">
    <property type="entry name" value="MITOCARRIER"/>
</dbReference>
<dbReference type="SUPFAM" id="SSF103506">
    <property type="entry name" value="Mitochondrial carrier"/>
    <property type="match status" value="1"/>
</dbReference>
<dbReference type="PROSITE" id="PS50920">
    <property type="entry name" value="SOLCAR"/>
    <property type="match status" value="3"/>
</dbReference>
<proteinExistence type="evidence at protein level"/>
<accession>O70579</accession>
<comment type="function">
    <text evidence="2">Peroxisomal transporter for multiple cofactors like coenzyme A (CoA), flavin adenine dinucleotide (FAD), flavin mononucleotide (FMN) and nucleotide adenosine monophosphate (AMP), and to a lesser extent for nicotinamide adenine dinucleotide (NAD(+)), adenosine diphosphate (ADP) and adenosine 3',5'-diphosphate (PAP). May catalyze the transport of free CoA, FAD and NAD(+) from the cytosol into the peroxisomal matrix by a counter-exchange mechanism.</text>
</comment>
<comment type="catalytic activity">
    <reaction evidence="2">
        <text>AMP(out) + CoA(in) = AMP(in) + CoA(out)</text>
        <dbReference type="Rhea" id="RHEA:73095"/>
        <dbReference type="ChEBI" id="CHEBI:57287"/>
        <dbReference type="ChEBI" id="CHEBI:456215"/>
    </reaction>
</comment>
<comment type="catalytic activity">
    <reaction evidence="2">
        <text>3'-dephospho-CoA(in) + AMP(out) = 3'-dephospho-CoA(out) + AMP(in)</text>
        <dbReference type="Rhea" id="RHEA:73099"/>
        <dbReference type="ChEBI" id="CHEBI:57328"/>
        <dbReference type="ChEBI" id="CHEBI:456215"/>
    </reaction>
</comment>
<comment type="catalytic activity">
    <reaction evidence="2">
        <text>acetyl-CoA(in) + AMP(out) = acetyl-CoA(out) + AMP(in)</text>
        <dbReference type="Rhea" id="RHEA:73447"/>
        <dbReference type="ChEBI" id="CHEBI:57288"/>
        <dbReference type="ChEBI" id="CHEBI:456215"/>
    </reaction>
</comment>
<comment type="catalytic activity">
    <reaction evidence="2">
        <text>AMP(in) + NAD(+)(out) = AMP(out) + NAD(+)(in)</text>
        <dbReference type="Rhea" id="RHEA:65424"/>
        <dbReference type="ChEBI" id="CHEBI:57540"/>
        <dbReference type="ChEBI" id="CHEBI:456215"/>
    </reaction>
</comment>
<comment type="catalytic activity">
    <reaction evidence="2">
        <text>FAD(in) + AMP(out) = FAD(out) + AMP(in)</text>
        <dbReference type="Rhea" id="RHEA:73087"/>
        <dbReference type="ChEBI" id="CHEBI:57692"/>
        <dbReference type="ChEBI" id="CHEBI:456215"/>
    </reaction>
</comment>
<comment type="catalytic activity">
    <reaction evidence="2">
        <text>FMN(in) + AMP(out) = FMN(out) + AMP(in)</text>
        <dbReference type="Rhea" id="RHEA:73091"/>
        <dbReference type="ChEBI" id="CHEBI:58210"/>
        <dbReference type="ChEBI" id="CHEBI:456215"/>
    </reaction>
</comment>
<comment type="catalytic activity">
    <reaction evidence="2">
        <text>AMP(in) + ADP(out) = AMP(out) + ADP(in)</text>
        <dbReference type="Rhea" id="RHEA:72851"/>
        <dbReference type="ChEBI" id="CHEBI:456215"/>
        <dbReference type="ChEBI" id="CHEBI:456216"/>
    </reaction>
</comment>
<comment type="catalytic activity">
    <reaction evidence="2">
        <text>adenosine 3',5'-bisphosphate(in) + AMP(out) = adenosine 3',5'-bisphosphate(out) + AMP(in)</text>
        <dbReference type="Rhea" id="RHEA:73451"/>
        <dbReference type="ChEBI" id="CHEBI:58343"/>
        <dbReference type="ChEBI" id="CHEBI:456215"/>
    </reaction>
</comment>
<comment type="catalytic activity">
    <reaction evidence="2">
        <text>FAD(in) + CoA(out) = FAD(out) + CoA(in)</text>
        <dbReference type="Rhea" id="RHEA:73143"/>
        <dbReference type="ChEBI" id="CHEBI:57287"/>
        <dbReference type="ChEBI" id="CHEBI:57692"/>
    </reaction>
</comment>
<comment type="catalytic activity">
    <reaction evidence="2">
        <text>FAD(in) + adenosine 3',5'-bisphosphate(out) = FAD(out) + adenosine 3',5'-bisphosphate(in)</text>
        <dbReference type="Rhea" id="RHEA:73147"/>
        <dbReference type="ChEBI" id="CHEBI:57692"/>
        <dbReference type="ChEBI" id="CHEBI:58343"/>
    </reaction>
</comment>
<comment type="catalytic activity">
    <reaction evidence="2">
        <text>FMN(in) + CoA(out) = FMN(out) + CoA(in)</text>
        <dbReference type="Rhea" id="RHEA:73151"/>
        <dbReference type="ChEBI" id="CHEBI:57287"/>
        <dbReference type="ChEBI" id="CHEBI:58210"/>
    </reaction>
</comment>
<comment type="catalytic activity">
    <reaction evidence="2">
        <text>FMN(in) + adenosine 3',5'-bisphosphate(out) = FMN(out) + adenosine 3',5'-bisphosphate(in)</text>
        <dbReference type="Rhea" id="RHEA:73155"/>
        <dbReference type="ChEBI" id="CHEBI:58210"/>
        <dbReference type="ChEBI" id="CHEBI:58343"/>
    </reaction>
</comment>
<comment type="catalytic activity">
    <reaction evidence="2">
        <text>FAD(out) + NAD(+)(in) = FAD(in) + NAD(+)(out)</text>
        <dbReference type="Rhea" id="RHEA:73163"/>
        <dbReference type="ChEBI" id="CHEBI:57540"/>
        <dbReference type="ChEBI" id="CHEBI:57692"/>
    </reaction>
</comment>
<comment type="catalytic activity">
    <reaction evidence="2">
        <text>FMN(out) + NAD(+)(in) = FMN(in) + NAD(+)(out)</text>
        <dbReference type="Rhea" id="RHEA:73159"/>
        <dbReference type="ChEBI" id="CHEBI:57540"/>
        <dbReference type="ChEBI" id="CHEBI:58210"/>
    </reaction>
</comment>
<comment type="catalytic activity">
    <reaction evidence="2">
        <text>NAD(+)(in) + CoA(out) = NAD(+)(out) + CoA(in)</text>
        <dbReference type="Rhea" id="RHEA:73167"/>
        <dbReference type="ChEBI" id="CHEBI:57287"/>
        <dbReference type="ChEBI" id="CHEBI:57540"/>
    </reaction>
</comment>
<comment type="catalytic activity">
    <reaction evidence="2">
        <text>adenosine 3',5'-bisphosphate(out) + NAD(+)(in) = adenosine 3',5'-bisphosphate(in) + NAD(+)(out)</text>
        <dbReference type="Rhea" id="RHEA:73171"/>
        <dbReference type="ChEBI" id="CHEBI:57540"/>
        <dbReference type="ChEBI" id="CHEBI:58343"/>
    </reaction>
</comment>
<comment type="catalytic activity">
    <reaction evidence="2">
        <text>FMN(out) + ADP(in) = FMN(in) + ADP(out)</text>
        <dbReference type="Rhea" id="RHEA:73175"/>
        <dbReference type="ChEBI" id="CHEBI:58210"/>
        <dbReference type="ChEBI" id="CHEBI:456216"/>
    </reaction>
</comment>
<comment type="catalytic activity">
    <reaction evidence="2">
        <text>FAD(out) + ADP(in) = FAD(in) + ADP(out)</text>
        <dbReference type="Rhea" id="RHEA:73183"/>
        <dbReference type="ChEBI" id="CHEBI:57692"/>
        <dbReference type="ChEBI" id="CHEBI:456216"/>
    </reaction>
</comment>
<comment type="catalytic activity">
    <reaction evidence="2">
        <text>ADP(out) + CoA(in) = ADP(in) + CoA(out)</text>
        <dbReference type="Rhea" id="RHEA:72839"/>
        <dbReference type="ChEBI" id="CHEBI:57287"/>
        <dbReference type="ChEBI" id="CHEBI:456216"/>
    </reaction>
</comment>
<comment type="catalytic activity">
    <reaction evidence="2">
        <text>adenosine 3',5'-bisphosphate(in) + ADP(out) = adenosine 3',5'-bisphosphate(out) + ADP(in)</text>
        <dbReference type="Rhea" id="RHEA:72847"/>
        <dbReference type="ChEBI" id="CHEBI:58343"/>
        <dbReference type="ChEBI" id="CHEBI:456216"/>
    </reaction>
</comment>
<comment type="subunit">
    <text evidence="2">Interacts (via N- and C-terminus peroxisomal targeting regions) with PEX19; the interaction occurs with the newly synthesized SLC25A17 in the cytosol.</text>
</comment>
<comment type="subcellular location">
    <subcellularLocation>
        <location evidence="2">Cytoplasm</location>
    </subcellularLocation>
    <subcellularLocation>
        <location evidence="2">Peroxisome membrane</location>
        <topology evidence="3">Multi-pass membrane protein</topology>
    </subcellularLocation>
</comment>
<comment type="tissue specificity">
    <text evidence="4">Expressed in liver, kidney, heart, spleen, muscle and lung.</text>
</comment>
<comment type="domain">
    <text evidence="2">The N- and C-terminal portions are exposed to the cytoplasm. Lacks a typical peroxisomal sorting signal. A region between helical transmembrane domains (TM) 4 and 5 and TM1-TM3 or TM4-TM6 are necessary for the peroxisome-targeting activity.</text>
</comment>
<comment type="similarity">
    <text evidence="5">Belongs to the mitochondrial carrier (TC 2.A.29) family.</text>
</comment>
<keyword id="KW-0050">Antiport</keyword>
<keyword id="KW-0963">Cytoplasm</keyword>
<keyword id="KW-0472">Membrane</keyword>
<keyword id="KW-0576">Peroxisome</keyword>
<keyword id="KW-1185">Reference proteome</keyword>
<keyword id="KW-0677">Repeat</keyword>
<keyword id="KW-0812">Transmembrane</keyword>
<keyword id="KW-1133">Transmembrane helix</keyword>
<keyword id="KW-0813">Transport</keyword>
<sequence length="307" mass="34413">MASVLSYESLVHAVAGAVGSVTAMTVFFPLDTARLRLQVDEKRKSKTTHAVLLEIIKEEGLLAPYRGWFPVISSLCCSNFVYFYTFNSLKAVWVKGQRSSTGKDLVVGFVAGVVNVLLTTPLWVVNTRLKLQGAKFRNEDIIPTNYKGIIDAFHQIIRDEGILALWNGTFPSLLLVFNPAIQFMFYEGLKRQLLKKRMKLSSLDVFIIGAIAKAIATTVTYPMQTVQSILRFGRHRLNPENRTLGSLRNVLSLLHQRVKRFGIMGLYKGLEAKLLQTVLTAALMFLVYEKLTAATFTVMGLKSTHKH</sequence>
<gene>
    <name type="primary">Slc25a17</name>
    <name type="synonym">Pmp34</name>
    <name type="synonym">Pmp35</name>
</gene>
<protein>
    <recommendedName>
        <fullName>Peroxisomal membrane protein PMP34</fullName>
    </recommendedName>
    <alternativeName>
        <fullName>34 kDa peroxisomal membrane protein</fullName>
    </alternativeName>
    <alternativeName>
        <fullName>Solute carrier family 25 member 17</fullName>
    </alternativeName>
</protein>
<feature type="chain" id="PRO_0000090706" description="Peroxisomal membrane protein PMP34">
    <location>
        <begin position="1"/>
        <end position="307"/>
    </location>
</feature>
<feature type="topological domain" description="Cytoplasmic" evidence="1">
    <location>
        <begin position="1"/>
        <end position="9"/>
    </location>
</feature>
<feature type="transmembrane region" description="Helical; Name=1" evidence="3">
    <location>
        <begin position="10"/>
        <end position="30"/>
    </location>
</feature>
<feature type="topological domain" description="Lumenal" evidence="3">
    <location>
        <begin position="31"/>
        <end position="66"/>
    </location>
</feature>
<feature type="transmembrane region" description="Helical; Name=2" evidence="3">
    <location>
        <begin position="67"/>
        <end position="87"/>
    </location>
</feature>
<feature type="topological domain" description="Cytoplasmic" evidence="3">
    <location>
        <begin position="88"/>
        <end position="104"/>
    </location>
</feature>
<feature type="transmembrane region" description="Helical; Name=3" evidence="3">
    <location>
        <begin position="105"/>
        <end position="125"/>
    </location>
</feature>
<feature type="topological domain" description="Lumenal" evidence="3">
    <location>
        <begin position="126"/>
        <end position="160"/>
    </location>
</feature>
<feature type="transmembrane region" description="Helical; Name=4" evidence="3">
    <location>
        <begin position="161"/>
        <end position="181"/>
    </location>
</feature>
<feature type="topological domain" description="Cytoplasmic" evidence="3">
    <location>
        <begin position="182"/>
        <end position="202"/>
    </location>
</feature>
<feature type="transmembrane region" description="Helical; Name=5" evidence="3">
    <location>
        <begin position="203"/>
        <end position="223"/>
    </location>
</feature>
<feature type="topological domain" description="Lumenal" evidence="3">
    <location>
        <begin position="224"/>
        <end position="280"/>
    </location>
</feature>
<feature type="transmembrane region" description="Helical; Name=6" evidence="3">
    <location>
        <begin position="281"/>
        <end position="301"/>
    </location>
</feature>
<feature type="topological domain" description="Cytoplasmic" evidence="1">
    <location>
        <begin position="302"/>
        <end position="307"/>
    </location>
</feature>
<feature type="repeat" description="Solcar 1">
    <location>
        <begin position="7"/>
        <end position="92"/>
    </location>
</feature>
<feature type="repeat" description="Solcar 2">
    <location>
        <begin position="99"/>
        <end position="192"/>
    </location>
</feature>
<feature type="repeat" description="Solcar 3">
    <location>
        <begin position="200"/>
        <end position="294"/>
    </location>
</feature>
<feature type="region of interest" description="Necessary for targeting to peroxisomes and interaction with PEX19" evidence="2">
    <location>
        <begin position="1"/>
        <end position="147"/>
    </location>
</feature>
<feature type="region of interest" description="Necessary for targeting to peroxisomes and interaction with PEX19" evidence="2">
    <location>
        <begin position="244"/>
        <end position="307"/>
    </location>
</feature>
<feature type="short sequence motif" description="Peroxisome localization signal" evidence="2">
    <location>
        <begin position="190"/>
        <end position="199"/>
    </location>
</feature>